<gene>
    <name evidence="2" type="primary">rpsL</name>
    <name type="ordered locus">UTI89_C3844</name>
</gene>
<feature type="chain" id="PRO_0000263555" description="Small ribosomal subunit protein uS12">
    <location>
        <begin position="1"/>
        <end position="124"/>
    </location>
</feature>
<feature type="modified residue" description="3-methylthioaspartic acid" evidence="1">
    <location>
        <position position="89"/>
    </location>
</feature>
<feature type="modified residue" description="N6-acetyllysine" evidence="2">
    <location>
        <position position="108"/>
    </location>
</feature>
<comment type="function">
    <text evidence="2">With S4 and S5 plays an important role in translational accuracy.</text>
</comment>
<comment type="function">
    <text evidence="2">Interacts with and stabilizes bases of the 16S rRNA that are involved in tRNA selection in the A site and with the mRNA backbone. Located at the interface of the 30S and 50S subunits, it traverses the body of the 30S subunit contacting proteins on the other side and probably holding the rRNA structure together. The combined cluster of proteins S8, S12 and S17 appears to hold together the shoulder and platform of the 30S subunit.</text>
</comment>
<comment type="subunit">
    <text evidence="2">Part of the 30S ribosomal subunit. Contacts proteins S8 and S17. May interact with IF1 in the 30S initiation complex.</text>
</comment>
<comment type="similarity">
    <text evidence="2">Belongs to the universal ribosomal protein uS12 family.</text>
</comment>
<comment type="sequence caution" evidence="3">
    <conflict type="erroneous initiation">
        <sequence resource="EMBL-CDS" id="ABE09273"/>
    </conflict>
</comment>
<evidence type="ECO:0000250" key="1"/>
<evidence type="ECO:0000255" key="2">
    <source>
        <dbReference type="HAMAP-Rule" id="MF_00403"/>
    </source>
</evidence>
<evidence type="ECO:0000305" key="3"/>
<proteinExistence type="inferred from homology"/>
<name>RS12_ECOUT</name>
<organism>
    <name type="scientific">Escherichia coli (strain UTI89 / UPEC)</name>
    <dbReference type="NCBI Taxonomy" id="364106"/>
    <lineage>
        <taxon>Bacteria</taxon>
        <taxon>Pseudomonadati</taxon>
        <taxon>Pseudomonadota</taxon>
        <taxon>Gammaproteobacteria</taxon>
        <taxon>Enterobacterales</taxon>
        <taxon>Enterobacteriaceae</taxon>
        <taxon>Escherichia</taxon>
    </lineage>
</organism>
<reference key="1">
    <citation type="journal article" date="2006" name="Proc. Natl. Acad. Sci. U.S.A.">
        <title>Identification of genes subject to positive selection in uropathogenic strains of Escherichia coli: a comparative genomics approach.</title>
        <authorList>
            <person name="Chen S.L."/>
            <person name="Hung C.-S."/>
            <person name="Xu J."/>
            <person name="Reigstad C.S."/>
            <person name="Magrini V."/>
            <person name="Sabo A."/>
            <person name="Blasiar D."/>
            <person name="Bieri T."/>
            <person name="Meyer R.R."/>
            <person name="Ozersky P."/>
            <person name="Armstrong J.R."/>
            <person name="Fulton R.S."/>
            <person name="Latreille J.P."/>
            <person name="Spieth J."/>
            <person name="Hooton T.M."/>
            <person name="Mardis E.R."/>
            <person name="Hultgren S.J."/>
            <person name="Gordon J.I."/>
        </authorList>
    </citation>
    <scope>NUCLEOTIDE SEQUENCE [LARGE SCALE GENOMIC DNA]</scope>
    <source>
        <strain>UTI89 / UPEC</strain>
    </source>
</reference>
<sequence length="124" mass="13737">MATVNQLVRKPRARKVAKSNVPALEACPQKRGVCTRVYTTTPKKPNSALRKVCRVRLTNGFEVTSYIGGEGHNLQEHSVILIRGGRVKDLPGVRYHTVRGALDCSGVKDRKQARSKYGVKRPKA</sequence>
<keyword id="KW-0007">Acetylation</keyword>
<keyword id="KW-0488">Methylation</keyword>
<keyword id="KW-0687">Ribonucleoprotein</keyword>
<keyword id="KW-0689">Ribosomal protein</keyword>
<keyword id="KW-0694">RNA-binding</keyword>
<keyword id="KW-0699">rRNA-binding</keyword>
<keyword id="KW-0820">tRNA-binding</keyword>
<protein>
    <recommendedName>
        <fullName evidence="2">Small ribosomal subunit protein uS12</fullName>
    </recommendedName>
    <alternativeName>
        <fullName evidence="3">30S ribosomal protein S12</fullName>
    </alternativeName>
</protein>
<accession>Q1R5U1</accession>
<dbReference type="EMBL" id="CP000243">
    <property type="protein sequence ID" value="ABE09273.1"/>
    <property type="status" value="ALT_INIT"/>
    <property type="molecule type" value="Genomic_DNA"/>
</dbReference>
<dbReference type="RefSeq" id="WP_000246815.1">
    <property type="nucleotide sequence ID" value="NZ_CP064825.1"/>
</dbReference>
<dbReference type="SMR" id="Q1R5U1"/>
<dbReference type="GeneID" id="98390450"/>
<dbReference type="KEGG" id="eci:UTI89_C3844"/>
<dbReference type="HOGENOM" id="CLU_104295_1_2_6"/>
<dbReference type="Proteomes" id="UP000001952">
    <property type="component" value="Chromosome"/>
</dbReference>
<dbReference type="GO" id="GO:0015935">
    <property type="term" value="C:small ribosomal subunit"/>
    <property type="evidence" value="ECO:0007669"/>
    <property type="project" value="InterPro"/>
</dbReference>
<dbReference type="GO" id="GO:0019843">
    <property type="term" value="F:rRNA binding"/>
    <property type="evidence" value="ECO:0007669"/>
    <property type="project" value="UniProtKB-UniRule"/>
</dbReference>
<dbReference type="GO" id="GO:0003735">
    <property type="term" value="F:structural constituent of ribosome"/>
    <property type="evidence" value="ECO:0007669"/>
    <property type="project" value="InterPro"/>
</dbReference>
<dbReference type="GO" id="GO:0000049">
    <property type="term" value="F:tRNA binding"/>
    <property type="evidence" value="ECO:0007669"/>
    <property type="project" value="UniProtKB-UniRule"/>
</dbReference>
<dbReference type="GO" id="GO:0006412">
    <property type="term" value="P:translation"/>
    <property type="evidence" value="ECO:0007669"/>
    <property type="project" value="UniProtKB-UniRule"/>
</dbReference>
<dbReference type="CDD" id="cd03368">
    <property type="entry name" value="Ribosomal_S12"/>
    <property type="match status" value="1"/>
</dbReference>
<dbReference type="FunFam" id="2.40.50.140:FF:000001">
    <property type="entry name" value="30S ribosomal protein S12"/>
    <property type="match status" value="1"/>
</dbReference>
<dbReference type="Gene3D" id="2.40.50.140">
    <property type="entry name" value="Nucleic acid-binding proteins"/>
    <property type="match status" value="1"/>
</dbReference>
<dbReference type="HAMAP" id="MF_00403_B">
    <property type="entry name" value="Ribosomal_uS12_B"/>
    <property type="match status" value="1"/>
</dbReference>
<dbReference type="InterPro" id="IPR012340">
    <property type="entry name" value="NA-bd_OB-fold"/>
</dbReference>
<dbReference type="InterPro" id="IPR006032">
    <property type="entry name" value="Ribosomal_uS12"/>
</dbReference>
<dbReference type="InterPro" id="IPR005679">
    <property type="entry name" value="Ribosomal_uS12_bac"/>
</dbReference>
<dbReference type="NCBIfam" id="TIGR00981">
    <property type="entry name" value="rpsL_bact"/>
    <property type="match status" value="1"/>
</dbReference>
<dbReference type="PANTHER" id="PTHR11652">
    <property type="entry name" value="30S RIBOSOMAL PROTEIN S12 FAMILY MEMBER"/>
    <property type="match status" value="1"/>
</dbReference>
<dbReference type="Pfam" id="PF00164">
    <property type="entry name" value="Ribosom_S12_S23"/>
    <property type="match status" value="1"/>
</dbReference>
<dbReference type="PIRSF" id="PIRSF002133">
    <property type="entry name" value="Ribosomal_S12/S23"/>
    <property type="match status" value="1"/>
</dbReference>
<dbReference type="PRINTS" id="PR01034">
    <property type="entry name" value="RIBOSOMALS12"/>
</dbReference>
<dbReference type="SUPFAM" id="SSF50249">
    <property type="entry name" value="Nucleic acid-binding proteins"/>
    <property type="match status" value="1"/>
</dbReference>
<dbReference type="PROSITE" id="PS00055">
    <property type="entry name" value="RIBOSOMAL_S12"/>
    <property type="match status" value="1"/>
</dbReference>